<gene>
    <name type="ordered locus">BQ2027_MB2672C</name>
</gene>
<name>Y2672_MYCBO</name>
<protein>
    <recommendedName>
        <fullName evidence="1">UPF0060 membrane protein Mb2672c</fullName>
    </recommendedName>
</protein>
<keyword id="KW-1003">Cell membrane</keyword>
<keyword id="KW-0472">Membrane</keyword>
<keyword id="KW-1185">Reference proteome</keyword>
<keyword id="KW-0812">Transmembrane</keyword>
<keyword id="KW-1133">Transmembrane helix</keyword>
<proteinExistence type="inferred from homology"/>
<accession>P67147</accession>
<accession>A0A1R3Y1S9</accession>
<accession>P71938</accession>
<accession>X2BLX0</accession>
<reference key="1">
    <citation type="journal article" date="2003" name="Proc. Natl. Acad. Sci. U.S.A.">
        <title>The complete genome sequence of Mycobacterium bovis.</title>
        <authorList>
            <person name="Garnier T."/>
            <person name="Eiglmeier K."/>
            <person name="Camus J.-C."/>
            <person name="Medina N."/>
            <person name="Mansoor H."/>
            <person name="Pryor M."/>
            <person name="Duthoy S."/>
            <person name="Grondin S."/>
            <person name="Lacroix C."/>
            <person name="Monsempe C."/>
            <person name="Simon S."/>
            <person name="Harris B."/>
            <person name="Atkin R."/>
            <person name="Doggett J."/>
            <person name="Mayes R."/>
            <person name="Keating L."/>
            <person name="Wheeler P.R."/>
            <person name="Parkhill J."/>
            <person name="Barrell B.G."/>
            <person name="Cole S.T."/>
            <person name="Gordon S.V."/>
            <person name="Hewinson R.G."/>
        </authorList>
    </citation>
    <scope>NUCLEOTIDE SEQUENCE [LARGE SCALE GENOMIC DNA]</scope>
    <source>
        <strain>ATCC BAA-935 / AF2122/97</strain>
    </source>
</reference>
<reference key="2">
    <citation type="journal article" date="2017" name="Genome Announc.">
        <title>Updated reference genome sequence and annotation of Mycobacterium bovis AF2122/97.</title>
        <authorList>
            <person name="Malone K.M."/>
            <person name="Farrell D."/>
            <person name="Stuber T.P."/>
            <person name="Schubert O.T."/>
            <person name="Aebersold R."/>
            <person name="Robbe-Austerman S."/>
            <person name="Gordon S.V."/>
        </authorList>
    </citation>
    <scope>NUCLEOTIDE SEQUENCE [LARGE SCALE GENOMIC DNA]</scope>
    <scope>GENOME REANNOTATION</scope>
    <source>
        <strain>ATCC BAA-935 / AF2122/97</strain>
    </source>
</reference>
<feature type="chain" id="PRO_0000162334" description="UPF0060 membrane protein Mb2672c">
    <location>
        <begin position="1"/>
        <end position="110"/>
    </location>
</feature>
<feature type="transmembrane region" description="Helical" evidence="1">
    <location>
        <begin position="6"/>
        <end position="26"/>
    </location>
</feature>
<feature type="transmembrane region" description="Helical" evidence="1">
    <location>
        <begin position="32"/>
        <end position="52"/>
    </location>
</feature>
<feature type="transmembrane region" description="Helical" evidence="1">
    <location>
        <begin position="61"/>
        <end position="81"/>
    </location>
</feature>
<feature type="transmembrane region" description="Helical" evidence="1">
    <location>
        <begin position="90"/>
        <end position="110"/>
    </location>
</feature>
<evidence type="ECO:0000255" key="1">
    <source>
        <dbReference type="HAMAP-Rule" id="MF_00010"/>
    </source>
</evidence>
<comment type="subcellular location">
    <subcellularLocation>
        <location evidence="1">Cell membrane</location>
        <topology evidence="1">Multi-pass membrane protein</topology>
    </subcellularLocation>
</comment>
<comment type="similarity">
    <text evidence="1">Belongs to the UPF0060 family.</text>
</comment>
<dbReference type="EMBL" id="LT708304">
    <property type="protein sequence ID" value="SIU01290.1"/>
    <property type="molecule type" value="Genomic_DNA"/>
</dbReference>
<dbReference type="RefSeq" id="NP_856318.1">
    <property type="nucleotide sequence ID" value="NC_002945.3"/>
</dbReference>
<dbReference type="RefSeq" id="WP_003413663.1">
    <property type="nucleotide sequence ID" value="NC_002945.4"/>
</dbReference>
<dbReference type="KEGG" id="mbo:BQ2027_MB2672C"/>
<dbReference type="PATRIC" id="fig|233413.5.peg.2933"/>
<dbReference type="Proteomes" id="UP000001419">
    <property type="component" value="Chromosome"/>
</dbReference>
<dbReference type="GO" id="GO:0005886">
    <property type="term" value="C:plasma membrane"/>
    <property type="evidence" value="ECO:0007669"/>
    <property type="project" value="UniProtKB-SubCell"/>
</dbReference>
<dbReference type="HAMAP" id="MF_00010">
    <property type="entry name" value="UPF0060"/>
    <property type="match status" value="1"/>
</dbReference>
<dbReference type="InterPro" id="IPR003844">
    <property type="entry name" value="UPF0060"/>
</dbReference>
<dbReference type="NCBIfam" id="NF002586">
    <property type="entry name" value="PRK02237.1"/>
    <property type="match status" value="1"/>
</dbReference>
<dbReference type="PANTHER" id="PTHR36116">
    <property type="entry name" value="UPF0060 MEMBRANE PROTEIN YNFA"/>
    <property type="match status" value="1"/>
</dbReference>
<dbReference type="PANTHER" id="PTHR36116:SF1">
    <property type="entry name" value="UPF0060 MEMBRANE PROTEIN YNFA"/>
    <property type="match status" value="1"/>
</dbReference>
<dbReference type="Pfam" id="PF02694">
    <property type="entry name" value="UPF0060"/>
    <property type="match status" value="1"/>
</dbReference>
<dbReference type="SUPFAM" id="SSF103481">
    <property type="entry name" value="Multidrug resistance efflux transporter EmrE"/>
    <property type="match status" value="1"/>
</dbReference>
<organism>
    <name type="scientific">Mycobacterium bovis (strain ATCC BAA-935 / AF2122/97)</name>
    <dbReference type="NCBI Taxonomy" id="233413"/>
    <lineage>
        <taxon>Bacteria</taxon>
        <taxon>Bacillati</taxon>
        <taxon>Actinomycetota</taxon>
        <taxon>Actinomycetes</taxon>
        <taxon>Mycobacteriales</taxon>
        <taxon>Mycobacteriaceae</taxon>
        <taxon>Mycobacterium</taxon>
        <taxon>Mycobacterium tuberculosis complex</taxon>
    </lineage>
</organism>
<sequence>MVVRSILLFVLAAVAEIGGAWLVWQGVREQRGWLWAGLGVIALGVYGFFATLQPDAHFGRVLAAYGGVFVAGSLAWGMALDGFRPDRWDVIGALGCMAGVAVIMYAPRGH</sequence>